<proteinExistence type="evidence at protein level"/>
<accession>O95154</accession>
<accession>Q86SR4</accession>
<accession>Q8IVN6</accession>
<accession>Q8N5V6</accession>
<accession>Q8TAX1</accession>
<accession>Q9NUC3</accession>
<gene>
    <name evidence="14" type="primary">AKR7A3</name>
    <name evidence="10" type="synonym">AFAR2</name>
</gene>
<evidence type="ECO:0000250" key="1"/>
<evidence type="ECO:0000250" key="2">
    <source>
        <dbReference type="UniProtKB" id="P38918"/>
    </source>
</evidence>
<evidence type="ECO:0000269" key="3">
    <source>
    </source>
</evidence>
<evidence type="ECO:0000269" key="4">
    <source>
    </source>
</evidence>
<evidence type="ECO:0000269" key="5">
    <source>
    </source>
</evidence>
<evidence type="ECO:0000269" key="6">
    <source>
    </source>
</evidence>
<evidence type="ECO:0000269" key="7">
    <source>
    </source>
</evidence>
<evidence type="ECO:0000269" key="8">
    <source ref="8"/>
</evidence>
<evidence type="ECO:0000303" key="9">
    <source>
    </source>
</evidence>
<evidence type="ECO:0000303" key="10">
    <source>
    </source>
</evidence>
<evidence type="ECO:0000305" key="11"/>
<evidence type="ECO:0000305" key="12">
    <source>
    </source>
</evidence>
<evidence type="ECO:0000305" key="13">
    <source>
    </source>
</evidence>
<evidence type="ECO:0000312" key="14">
    <source>
        <dbReference type="HGNC" id="HGNC:390"/>
    </source>
</evidence>
<evidence type="ECO:0007744" key="15">
    <source>
        <dbReference type="PDB" id="2CLP"/>
    </source>
</evidence>
<evidence type="ECO:0007744" key="16">
    <source>
    </source>
</evidence>
<evidence type="ECO:0007829" key="17">
    <source>
        <dbReference type="PDB" id="2CLP"/>
    </source>
</evidence>
<name>ARK73_HUMAN</name>
<dbReference type="EC" id="1.1.1.2" evidence="3 4 7"/>
<dbReference type="EMBL" id="AF040639">
    <property type="protein sequence ID" value="AAD02195.1"/>
    <property type="molecule type" value="mRNA"/>
</dbReference>
<dbReference type="EMBL" id="AJ271799">
    <property type="protein sequence ID" value="CAC81076.1"/>
    <property type="molecule type" value="mRNA"/>
</dbReference>
<dbReference type="EMBL" id="AL035413">
    <property type="status" value="NOT_ANNOTATED_CDS"/>
    <property type="molecule type" value="Genomic_DNA"/>
</dbReference>
<dbReference type="EMBL" id="BC025709">
    <property type="protein sequence ID" value="AAH25709.1"/>
    <property type="molecule type" value="mRNA"/>
</dbReference>
<dbReference type="EMBL" id="BC031562">
    <property type="protein sequence ID" value="AAH31562.1"/>
    <property type="molecule type" value="mRNA"/>
</dbReference>
<dbReference type="EMBL" id="BC042420">
    <property type="protein sequence ID" value="AAH42420.2"/>
    <property type="molecule type" value="mRNA"/>
</dbReference>
<dbReference type="CCDS" id="CCDS193.1"/>
<dbReference type="RefSeq" id="NP_036199.2">
    <property type="nucleotide sequence ID" value="NM_012067.2"/>
</dbReference>
<dbReference type="PDB" id="2CLP">
    <property type="method" value="X-ray"/>
    <property type="resolution" value="3.00 A"/>
    <property type="chains" value="A/B/C/D/E/F/G/H/I/J/K=8-331"/>
</dbReference>
<dbReference type="PDBsum" id="2CLP"/>
<dbReference type="SMR" id="O95154"/>
<dbReference type="BioGRID" id="116626">
    <property type="interactions" value="18"/>
</dbReference>
<dbReference type="FunCoup" id="O95154">
    <property type="interactions" value="93"/>
</dbReference>
<dbReference type="IntAct" id="O95154">
    <property type="interactions" value="18"/>
</dbReference>
<dbReference type="MINT" id="O95154"/>
<dbReference type="STRING" id="9606.ENSP00000355377"/>
<dbReference type="GlyGen" id="O95154">
    <property type="glycosylation" value="1 site"/>
</dbReference>
<dbReference type="iPTMnet" id="O95154"/>
<dbReference type="PhosphoSitePlus" id="O95154"/>
<dbReference type="BioMuta" id="AKR7A3"/>
<dbReference type="jPOST" id="O95154"/>
<dbReference type="MassIVE" id="O95154"/>
<dbReference type="PaxDb" id="9606-ENSP00000355377"/>
<dbReference type="PeptideAtlas" id="O95154"/>
<dbReference type="ProteomicsDB" id="50669"/>
<dbReference type="Antibodypedia" id="29611">
    <property type="antibodies" value="162 antibodies from 28 providers"/>
</dbReference>
<dbReference type="DNASU" id="22977"/>
<dbReference type="Ensembl" id="ENST00000361640.5">
    <property type="protein sequence ID" value="ENSP00000355377.4"/>
    <property type="gene ID" value="ENSG00000162482.5"/>
</dbReference>
<dbReference type="GeneID" id="22977"/>
<dbReference type="KEGG" id="hsa:22977"/>
<dbReference type="MANE-Select" id="ENST00000361640.5">
    <property type="protein sequence ID" value="ENSP00000355377.4"/>
    <property type="RefSeq nucleotide sequence ID" value="NM_012067.3"/>
    <property type="RefSeq protein sequence ID" value="NP_036199.2"/>
</dbReference>
<dbReference type="UCSC" id="uc001bbv.2">
    <property type="organism name" value="human"/>
</dbReference>
<dbReference type="AGR" id="HGNC:390"/>
<dbReference type="CTD" id="22977"/>
<dbReference type="DisGeNET" id="22977"/>
<dbReference type="GeneCards" id="AKR7A3"/>
<dbReference type="HGNC" id="HGNC:390">
    <property type="gene designation" value="AKR7A3"/>
</dbReference>
<dbReference type="HPA" id="ENSG00000162482">
    <property type="expression patterns" value="Tissue enhanced (intestine, liver, pancreas, stomach)"/>
</dbReference>
<dbReference type="MIM" id="608477">
    <property type="type" value="gene"/>
</dbReference>
<dbReference type="neXtProt" id="NX_O95154"/>
<dbReference type="OpenTargets" id="ENSG00000162482"/>
<dbReference type="PharmGKB" id="PA24683"/>
<dbReference type="VEuPathDB" id="HostDB:ENSG00000162482"/>
<dbReference type="eggNOG" id="ENOG502QU2T">
    <property type="taxonomic scope" value="Eukaryota"/>
</dbReference>
<dbReference type="GeneTree" id="ENSGT00940000163704"/>
<dbReference type="HOGENOM" id="CLU_023205_1_1_1"/>
<dbReference type="InParanoid" id="O95154"/>
<dbReference type="OMA" id="QICEICI"/>
<dbReference type="OrthoDB" id="48988at2759"/>
<dbReference type="PAN-GO" id="O95154">
    <property type="GO annotations" value="2 GO annotations based on evolutionary models"/>
</dbReference>
<dbReference type="PhylomeDB" id="O95154"/>
<dbReference type="TreeFam" id="TF329173"/>
<dbReference type="PathwayCommons" id="O95154"/>
<dbReference type="Reactome" id="R-HSA-5423646">
    <property type="pathway name" value="Aflatoxin activation and detoxification"/>
</dbReference>
<dbReference type="SABIO-RK" id="O95154"/>
<dbReference type="SignaLink" id="O95154"/>
<dbReference type="BioGRID-ORCS" id="22977">
    <property type="hits" value="51 hits in 1115 CRISPR screens"/>
</dbReference>
<dbReference type="EvolutionaryTrace" id="O95154"/>
<dbReference type="GenomeRNAi" id="22977"/>
<dbReference type="Pharos" id="O95154">
    <property type="development level" value="Tbio"/>
</dbReference>
<dbReference type="PRO" id="PR:O95154"/>
<dbReference type="Proteomes" id="UP000005640">
    <property type="component" value="Chromosome 1"/>
</dbReference>
<dbReference type="RNAct" id="O95154">
    <property type="molecule type" value="protein"/>
</dbReference>
<dbReference type="Bgee" id="ENSG00000162482">
    <property type="expression patterns" value="Expressed in duodenum and 180 other cell types or tissues"/>
</dbReference>
<dbReference type="ExpressionAtlas" id="O95154">
    <property type="expression patterns" value="baseline and differential"/>
</dbReference>
<dbReference type="GO" id="GO:0005737">
    <property type="term" value="C:cytoplasm"/>
    <property type="evidence" value="ECO:0000318"/>
    <property type="project" value="GO_Central"/>
</dbReference>
<dbReference type="GO" id="GO:0005829">
    <property type="term" value="C:cytosol"/>
    <property type="evidence" value="ECO:0000314"/>
    <property type="project" value="HPA"/>
</dbReference>
<dbReference type="GO" id="GO:0070062">
    <property type="term" value="C:extracellular exosome"/>
    <property type="evidence" value="ECO:0007005"/>
    <property type="project" value="UniProtKB"/>
</dbReference>
<dbReference type="GO" id="GO:0005794">
    <property type="term" value="C:Golgi apparatus"/>
    <property type="evidence" value="ECO:0000314"/>
    <property type="project" value="HPA"/>
</dbReference>
<dbReference type="GO" id="GO:0004033">
    <property type="term" value="F:aldo-keto reductase (NADPH) activity"/>
    <property type="evidence" value="ECO:0000314"/>
    <property type="project" value="UniProtKB"/>
</dbReference>
<dbReference type="GO" id="GO:0009055">
    <property type="term" value="F:electron transfer activity"/>
    <property type="evidence" value="ECO:0000304"/>
    <property type="project" value="UniProtKB"/>
</dbReference>
<dbReference type="GO" id="GO:0042802">
    <property type="term" value="F:identical protein binding"/>
    <property type="evidence" value="ECO:0000353"/>
    <property type="project" value="IntAct"/>
</dbReference>
<dbReference type="GO" id="GO:0070401">
    <property type="term" value="F:NADP+ binding"/>
    <property type="evidence" value="ECO:0000250"/>
    <property type="project" value="UniProtKB"/>
</dbReference>
<dbReference type="GO" id="GO:0046223">
    <property type="term" value="P:aflatoxin catabolic process"/>
    <property type="evidence" value="ECO:0000314"/>
    <property type="project" value="UniProtKB"/>
</dbReference>
<dbReference type="GO" id="GO:0006081">
    <property type="term" value="P:aldehyde metabolic process"/>
    <property type="evidence" value="ECO:0000304"/>
    <property type="project" value="ProtInc"/>
</dbReference>
<dbReference type="CDD" id="cd19075">
    <property type="entry name" value="AKR_AKR7A1-5"/>
    <property type="match status" value="1"/>
</dbReference>
<dbReference type="FunFam" id="3.20.20.100:FF:000017">
    <property type="entry name" value="Aflatoxin B1 aldehyde reductase member 2"/>
    <property type="match status" value="1"/>
</dbReference>
<dbReference type="Gene3D" id="3.20.20.100">
    <property type="entry name" value="NADP-dependent oxidoreductase domain"/>
    <property type="match status" value="1"/>
</dbReference>
<dbReference type="InterPro" id="IPR050523">
    <property type="entry name" value="AKR_Detox_Biosynth"/>
</dbReference>
<dbReference type="InterPro" id="IPR023210">
    <property type="entry name" value="NADP_OxRdtase_dom"/>
</dbReference>
<dbReference type="InterPro" id="IPR036812">
    <property type="entry name" value="NADP_OxRdtase_dom_sf"/>
</dbReference>
<dbReference type="PANTHER" id="PTHR43364:SF4">
    <property type="entry name" value="NAD(P)-LINKED OXIDOREDUCTASE SUPERFAMILY PROTEIN"/>
    <property type="match status" value="1"/>
</dbReference>
<dbReference type="PANTHER" id="PTHR43364">
    <property type="entry name" value="NADH-SPECIFIC METHYLGLYOXAL REDUCTASE-RELATED"/>
    <property type="match status" value="1"/>
</dbReference>
<dbReference type="Pfam" id="PF00248">
    <property type="entry name" value="Aldo_ket_red"/>
    <property type="match status" value="1"/>
</dbReference>
<dbReference type="SUPFAM" id="SSF51430">
    <property type="entry name" value="NAD(P)-linked oxidoreductase"/>
    <property type="match status" value="1"/>
</dbReference>
<feature type="chain" id="PRO_0000070378" description="Aldo-keto reductase family 7 member A3">
    <location>
        <begin position="1"/>
        <end position="331"/>
    </location>
</feature>
<feature type="active site" description="Proton donor" evidence="1">
    <location>
        <position position="49"/>
    </location>
</feature>
<feature type="binding site" evidence="8 15">
    <location>
        <position position="17"/>
    </location>
    <ligand>
        <name>NADPH</name>
        <dbReference type="ChEBI" id="CHEBI:57783"/>
    </ligand>
</feature>
<feature type="binding site" evidence="8 15">
    <location>
        <position position="44"/>
    </location>
    <ligand>
        <name>NADPH</name>
        <dbReference type="ChEBI" id="CHEBI:57783"/>
    </ligand>
</feature>
<feature type="binding site" evidence="8 15">
    <location>
        <position position="49"/>
    </location>
    <ligand>
        <name>NADPH</name>
        <dbReference type="ChEBI" id="CHEBI:57783"/>
    </ligand>
</feature>
<feature type="binding site" evidence="8 15">
    <location>
        <position position="113"/>
    </location>
    <ligand>
        <name>NADPH</name>
        <dbReference type="ChEBI" id="CHEBI:57783"/>
    </ligand>
</feature>
<feature type="binding site" evidence="8 15">
    <location>
        <position position="143"/>
    </location>
    <ligand>
        <name>NADPH</name>
        <dbReference type="ChEBI" id="CHEBI:57783"/>
    </ligand>
</feature>
<feature type="binding site" evidence="8 15">
    <location>
        <position position="144"/>
    </location>
    <ligand>
        <name>NADPH</name>
        <dbReference type="ChEBI" id="CHEBI:57783"/>
    </ligand>
</feature>
<feature type="binding site" evidence="8 15">
    <location>
        <position position="198"/>
    </location>
    <ligand>
        <name>NADPH</name>
        <dbReference type="ChEBI" id="CHEBI:57783"/>
    </ligand>
</feature>
<feature type="binding site" evidence="8 15">
    <location>
        <position position="200"/>
    </location>
    <ligand>
        <name>NADPH</name>
        <dbReference type="ChEBI" id="CHEBI:57783"/>
    </ligand>
</feature>
<feature type="binding site" evidence="8 15">
    <location>
        <position position="202"/>
    </location>
    <ligand>
        <name>NADPH</name>
        <dbReference type="ChEBI" id="CHEBI:57783"/>
    </ligand>
</feature>
<feature type="binding site" evidence="8 15">
    <location>
        <position position="208"/>
    </location>
    <ligand>
        <name>NADPH</name>
        <dbReference type="ChEBI" id="CHEBI:57783"/>
    </ligand>
</feature>
<feature type="binding site" evidence="8 15">
    <location>
        <position position="209"/>
    </location>
    <ligand>
        <name>NADPH</name>
        <dbReference type="ChEBI" id="CHEBI:57783"/>
    </ligand>
</feature>
<feature type="binding site" evidence="8 15">
    <location>
        <position position="222"/>
    </location>
    <ligand>
        <name>NADPH</name>
        <dbReference type="ChEBI" id="CHEBI:57783"/>
    </ligand>
</feature>
<feature type="binding site" evidence="8 15">
    <location>
        <position position="290"/>
    </location>
    <ligand>
        <name>NADPH</name>
        <dbReference type="ChEBI" id="CHEBI:57783"/>
    </ligand>
</feature>
<feature type="binding site" evidence="8 15">
    <location>
        <position position="294"/>
    </location>
    <ligand>
        <name>NADPH</name>
        <dbReference type="ChEBI" id="CHEBI:57783"/>
    </ligand>
</feature>
<feature type="binding site" evidence="8 15">
    <location>
        <position position="298"/>
    </location>
    <ligand>
        <name>NADPH</name>
        <dbReference type="ChEBI" id="CHEBI:57783"/>
    </ligand>
</feature>
<feature type="site" description="Lowers pKa of active site Tyr" evidence="1">
    <location>
        <position position="77"/>
    </location>
</feature>
<feature type="modified residue" description="Phosphoserine" evidence="2">
    <location>
        <position position="6"/>
    </location>
</feature>
<feature type="modified residue" description="Phosphoserine" evidence="16">
    <location>
        <position position="85"/>
    </location>
</feature>
<feature type="modified residue" description="Phosphothreonine" evidence="16">
    <location>
        <position position="227"/>
    </location>
</feature>
<feature type="sequence variant" id="VAR_017416" description="In dbSNP:rs2231198." evidence="3 6">
    <original>V</original>
    <variation>M</variation>
    <location>
        <position position="138"/>
    </location>
</feature>
<feature type="sequence variant" id="VAR_017417" description="In dbSNP:rs1738023." evidence="3 5 6">
    <original>N</original>
    <variation>D</variation>
    <location>
        <position position="215"/>
    </location>
</feature>
<feature type="sequence variant" id="VAR_017418" description="In dbSNP:rs1738025." evidence="3 5 6">
    <original>T</original>
    <variation>A</variation>
    <location>
        <position position="323"/>
    </location>
</feature>
<feature type="sequence conflict" description="In Ref. 1; AAD02195." evidence="11" ref="1">
    <original>E</original>
    <variation>D</variation>
    <location>
        <position position="51"/>
    </location>
</feature>
<feature type="sequence conflict" description="In Ref. 4; AAH42420." evidence="11" ref="4">
    <original>L</original>
    <variation>P</variation>
    <location>
        <position position="247"/>
    </location>
</feature>
<feature type="strand" evidence="17">
    <location>
        <begin position="11"/>
        <end position="15"/>
    </location>
</feature>
<feature type="turn" evidence="17">
    <location>
        <begin position="20"/>
        <end position="22"/>
    </location>
</feature>
<feature type="helix" evidence="17">
    <location>
        <begin position="25"/>
        <end position="36"/>
    </location>
</feature>
<feature type="turn" evidence="17">
    <location>
        <begin position="37"/>
        <end position="39"/>
    </location>
</feature>
<feature type="strand" evidence="17">
    <location>
        <begin position="42"/>
        <end position="44"/>
    </location>
</feature>
<feature type="helix" evidence="17">
    <location>
        <begin position="49"/>
        <end position="52"/>
    </location>
</feature>
<feature type="helix" evidence="17">
    <location>
        <begin position="53"/>
        <end position="59"/>
    </location>
</feature>
<feature type="strand" evidence="17">
    <location>
        <begin position="67"/>
        <end position="69"/>
    </location>
</feature>
<feature type="strand" evidence="17">
    <location>
        <begin position="73"/>
        <end position="78"/>
    </location>
</feature>
<feature type="helix" evidence="17">
    <location>
        <begin position="88"/>
        <end position="102"/>
    </location>
</feature>
<feature type="strand" evidence="17">
    <location>
        <begin position="107"/>
        <end position="112"/>
    </location>
</feature>
<feature type="helix" evidence="17">
    <location>
        <begin position="121"/>
        <end position="133"/>
    </location>
</feature>
<feature type="strand" evidence="17">
    <location>
        <begin position="136"/>
        <end position="144"/>
    </location>
</feature>
<feature type="helix" evidence="17">
    <location>
        <begin position="147"/>
        <end position="160"/>
    </location>
</feature>
<feature type="strand" evidence="17">
    <location>
        <begin position="165"/>
        <end position="171"/>
    </location>
</feature>
<feature type="helix" evidence="17">
    <location>
        <begin position="178"/>
        <end position="180"/>
    </location>
</feature>
<feature type="helix" evidence="17">
    <location>
        <begin position="183"/>
        <end position="190"/>
    </location>
</feature>
<feature type="strand" evidence="17">
    <location>
        <begin position="193"/>
        <end position="197"/>
    </location>
</feature>
<feature type="helix" evidence="17">
    <location>
        <begin position="201"/>
        <end position="206"/>
    </location>
</feature>
<feature type="helix" evidence="17">
    <location>
        <begin position="211"/>
        <end position="214"/>
    </location>
</feature>
<feature type="turn" evidence="17">
    <location>
        <begin position="215"/>
        <end position="217"/>
    </location>
</feature>
<feature type="strand" evidence="17">
    <location>
        <begin position="220"/>
        <end position="226"/>
    </location>
</feature>
<feature type="helix" evidence="17">
    <location>
        <begin position="229"/>
        <end position="236"/>
    </location>
</feature>
<feature type="helix" evidence="17">
    <location>
        <begin position="239"/>
        <end position="256"/>
    </location>
</feature>
<feature type="helix" evidence="17">
    <location>
        <begin position="257"/>
        <end position="259"/>
    </location>
</feature>
<feature type="helix" evidence="17">
    <location>
        <begin position="263"/>
        <end position="274"/>
    </location>
</feature>
<feature type="helix" evidence="17">
    <location>
        <begin position="279"/>
        <end position="281"/>
    </location>
</feature>
<feature type="strand" evidence="17">
    <location>
        <begin position="284"/>
        <end position="287"/>
    </location>
</feature>
<feature type="helix" evidence="17">
    <location>
        <begin position="292"/>
        <end position="303"/>
    </location>
</feature>
<feature type="helix" evidence="17">
    <location>
        <begin position="309"/>
        <end position="322"/>
    </location>
</feature>
<feature type="helix" evidence="17">
    <location>
        <begin position="323"/>
        <end position="325"/>
    </location>
</feature>
<keyword id="KW-0002">3D-structure</keyword>
<keyword id="KW-0963">Cytoplasm</keyword>
<keyword id="KW-0216">Detoxification</keyword>
<keyword id="KW-0521">NADP</keyword>
<keyword id="KW-0560">Oxidoreductase</keyword>
<keyword id="KW-0597">Phosphoprotein</keyword>
<keyword id="KW-1267">Proteomics identification</keyword>
<keyword id="KW-1185">Reference proteome</keyword>
<comment type="function">
    <text evidence="3 4 7">Catalyzes the NADPH-dependent reduction of various carbonyl-containing compounds, including aldehydes, ketones, and toxic products from cellular metabolism or environmental exposure. Can reduce the dialdehyde form of aflatoxin B1 (AFB1) into alcohol derivatives, via monoaldehydes intermediates. Can reduce the dialdehyde form of aflatoxin B1 (AFB1) into alcohol derivatives, via monoaldehydes intermediates, thus preventing the formation of protein adducts that contribute to AFB1-induced toxicity.</text>
</comment>
<comment type="catalytic activity">
    <reaction evidence="3 7">
        <text>a primary alcohol + NADP(+) = an aldehyde + NADPH + H(+)</text>
        <dbReference type="Rhea" id="RHEA:15937"/>
        <dbReference type="ChEBI" id="CHEBI:15378"/>
        <dbReference type="ChEBI" id="CHEBI:15734"/>
        <dbReference type="ChEBI" id="CHEBI:17478"/>
        <dbReference type="ChEBI" id="CHEBI:57783"/>
        <dbReference type="ChEBI" id="CHEBI:58349"/>
        <dbReference type="EC" id="1.1.1.2"/>
    </reaction>
    <physiologicalReaction direction="right-to-left" evidence="12">
        <dbReference type="Rhea" id="RHEA:15939"/>
    </physiologicalReaction>
</comment>
<comment type="catalytic activity">
    <reaction evidence="4">
        <text>aflatoxin B1 dialdehyde + NADPH + H(+) = aflatoxin B1 C(6a)-monoaldehyde + NADP(+)</text>
        <dbReference type="Rhea" id="RHEA:84055"/>
        <dbReference type="ChEBI" id="CHEBI:15378"/>
        <dbReference type="ChEBI" id="CHEBI:57783"/>
        <dbReference type="ChEBI" id="CHEBI:58349"/>
        <dbReference type="ChEBI" id="CHEBI:133967"/>
        <dbReference type="ChEBI" id="CHEBI:233587"/>
    </reaction>
    <physiologicalReaction direction="left-to-right" evidence="13">
        <dbReference type="Rhea" id="RHEA:84056"/>
    </physiologicalReaction>
</comment>
<comment type="catalytic activity">
    <reaction evidence="4">
        <text>aflatoxin B1 dialdehyde + NADPH + H(+) = aflatoxin B1 C(8)-monoaldehyde + NADP(+)</text>
        <dbReference type="Rhea" id="RHEA:84059"/>
        <dbReference type="ChEBI" id="CHEBI:15378"/>
        <dbReference type="ChEBI" id="CHEBI:57783"/>
        <dbReference type="ChEBI" id="CHEBI:58349"/>
        <dbReference type="ChEBI" id="CHEBI:133967"/>
        <dbReference type="ChEBI" id="CHEBI:233588"/>
    </reaction>
    <physiologicalReaction direction="left-to-right" evidence="13">
        <dbReference type="Rhea" id="RHEA:84060"/>
    </physiologicalReaction>
</comment>
<comment type="catalytic activity">
    <reaction evidence="4">
        <text>aflatoxin B1 C(6a)-monoaldehyde + NADPH + 2 H(+) = aflatoxin B1 triol + NADP(+)</text>
        <dbReference type="Rhea" id="RHEA:84063"/>
        <dbReference type="ChEBI" id="CHEBI:15378"/>
        <dbReference type="ChEBI" id="CHEBI:53108"/>
        <dbReference type="ChEBI" id="CHEBI:57783"/>
        <dbReference type="ChEBI" id="CHEBI:58349"/>
        <dbReference type="ChEBI" id="CHEBI:233587"/>
    </reaction>
    <physiologicalReaction direction="left-to-right" evidence="13">
        <dbReference type="Rhea" id="RHEA:84064"/>
    </physiologicalReaction>
</comment>
<comment type="activity regulation">
    <text evidence="2">Inhibited by citrate.</text>
</comment>
<comment type="biophysicochemical properties">
    <kinetics>
        <KM evidence="3">9 uM for AFB1 dihydrodiol (pH 6.6)</KM>
        <KM evidence="3">8.6 uM for AFB1 dihydrodiol (pH 7.4)</KM>
        <KM evidence="3">118.3 uM for 4-nitrobenzaldehyde</KM>
        <KM evidence="3">4.3 uM for 9,10-phenanthrenequinone</KM>
        <Vmax evidence="3">78.0 umol/min/mg enzyme with 4-nitrobenzaldehyde as substrate</Vmax>
        <Vmax evidence="3">6.4 umol/min/mg enzyme with 9,10-phenanthrenequinone as substrate</Vmax>
        <Vmax evidence="3">0.34 umol/min/mg enzyme with AFB1 dihydrodiol as substrate (pH 6.6)</Vmax>
        <Vmax evidence="3">0.6 umol/min/mg enzyme with AFB1 dihydrodiol as substrate (pH 7.4)</Vmax>
    </kinetics>
</comment>
<comment type="subunit">
    <text evidence="8">Homodimer.</text>
</comment>
<comment type="interaction">
    <interactant intactId="EBI-748869">
        <id>O95154</id>
    </interactant>
    <interactant intactId="EBI-748855">
        <id>O43488</id>
        <label>AKR7A2</label>
    </interactant>
    <organismsDiffer>false</organismsDiffer>
    <experiments>8</experiments>
</comment>
<comment type="interaction">
    <interactant intactId="EBI-748869">
        <id>O95154</id>
    </interactant>
    <interactant intactId="EBI-748869">
        <id>O95154</id>
        <label>AKR7A3</label>
    </interactant>
    <organismsDiffer>false</organismsDiffer>
    <experiments>6</experiments>
</comment>
<comment type="interaction">
    <interactant intactId="EBI-748869">
        <id>O95154</id>
    </interactant>
    <interactant intactId="EBI-349854">
        <id>P13569</id>
        <label>CFTR</label>
    </interactant>
    <organismsDiffer>false</organismsDiffer>
    <experiments>4</experiments>
</comment>
<comment type="interaction">
    <interactant intactId="EBI-748869">
        <id>O95154</id>
    </interactant>
    <interactant intactId="EBI-948001">
        <id>Q15323</id>
        <label>KRT31</label>
    </interactant>
    <organismsDiffer>false</organismsDiffer>
    <experiments>3</experiments>
</comment>
<comment type="interaction">
    <interactant intactId="EBI-748869">
        <id>O95154</id>
    </interactant>
    <interactant intactId="EBI-11959885">
        <id>Q07627</id>
        <label>KRTAP1-1</label>
    </interactant>
    <organismsDiffer>false</organismsDiffer>
    <experiments>3</experiments>
</comment>
<comment type="interaction">
    <interactant intactId="EBI-748869">
        <id>O95154</id>
    </interactant>
    <interactant intactId="EBI-750109">
        <id>Q9NYB0</id>
        <label>TERF2IP</label>
    </interactant>
    <organismsDiffer>false</organismsDiffer>
    <experiments>2</experiments>
</comment>
<comment type="subcellular location">
    <subcellularLocation>
        <location evidence="2">Cytoplasm</location>
    </subcellularLocation>
</comment>
<comment type="tissue specificity">
    <text evidence="5 7">Expressed in colon, kidney, liver, pancreas, adenocarcinoma and endometrium.</text>
</comment>
<comment type="similarity">
    <text evidence="11">Belongs to the aldo/keto reductase family. Aldo/keto reductase 2 subfamily.</text>
</comment>
<reference key="1">
    <citation type="journal article" date="1999" name="Carcinogenesis">
        <title>cDNA cloning, expression and activity of a second human aflatoxin B1-metabolizing member of the aldo-keto reductase superfamily, AKR7A3.</title>
        <authorList>
            <person name="Knight L.P."/>
            <person name="Primiano T."/>
            <person name="Groopman J.D."/>
            <person name="Kensler T.W."/>
            <person name="Sutter T.R."/>
        </authorList>
    </citation>
    <scope>NUCLEOTIDE SEQUENCE [MRNA]</scope>
    <scope>FUNCTION</scope>
    <scope>CATALYTIC ACTIVITY</scope>
    <scope>BIOPHYSICOCHEMICAL PROPERTIES</scope>
    <scope>VARIANTS MET-138; ASP-215 AND ALA-323</scope>
    <source>
        <tissue>Liver</tissue>
    </source>
</reference>
<reference key="2">
    <citation type="journal article" date="2003" name="Oncogene">
        <title>Aflatoxin B1 aldehyde reductase (AFAR) genes cluster at 1p35-1p36.1 in a region frequently altered in human tumour cells.</title>
        <authorList>
            <person name="Praml C."/>
            <person name="Savelyeva L."/>
            <person name="Schwab M."/>
        </authorList>
    </citation>
    <scope>NUCLEOTIDE SEQUENCE [MRNA]</scope>
    <scope>TISSUE SPECIFICITY</scope>
    <scope>VARIANTS ASP-215 AND ALA-323</scope>
</reference>
<reference key="3">
    <citation type="journal article" date="2006" name="Nature">
        <title>The DNA sequence and biological annotation of human chromosome 1.</title>
        <authorList>
            <person name="Gregory S.G."/>
            <person name="Barlow K.F."/>
            <person name="McLay K.E."/>
            <person name="Kaul R."/>
            <person name="Swarbreck D."/>
            <person name="Dunham A."/>
            <person name="Scott C.E."/>
            <person name="Howe K.L."/>
            <person name="Woodfine K."/>
            <person name="Spencer C.C.A."/>
            <person name="Jones M.C."/>
            <person name="Gillson C."/>
            <person name="Searle S."/>
            <person name="Zhou Y."/>
            <person name="Kokocinski F."/>
            <person name="McDonald L."/>
            <person name="Evans R."/>
            <person name="Phillips K."/>
            <person name="Atkinson A."/>
            <person name="Cooper R."/>
            <person name="Jones C."/>
            <person name="Hall R.E."/>
            <person name="Andrews T.D."/>
            <person name="Lloyd C."/>
            <person name="Ainscough R."/>
            <person name="Almeida J.P."/>
            <person name="Ambrose K.D."/>
            <person name="Anderson F."/>
            <person name="Andrew R.W."/>
            <person name="Ashwell R.I.S."/>
            <person name="Aubin K."/>
            <person name="Babbage A.K."/>
            <person name="Bagguley C.L."/>
            <person name="Bailey J."/>
            <person name="Beasley H."/>
            <person name="Bethel G."/>
            <person name="Bird C.P."/>
            <person name="Bray-Allen S."/>
            <person name="Brown J.Y."/>
            <person name="Brown A.J."/>
            <person name="Buckley D."/>
            <person name="Burton J."/>
            <person name="Bye J."/>
            <person name="Carder C."/>
            <person name="Chapman J.C."/>
            <person name="Clark S.Y."/>
            <person name="Clarke G."/>
            <person name="Clee C."/>
            <person name="Cobley V."/>
            <person name="Collier R.E."/>
            <person name="Corby N."/>
            <person name="Coville G.J."/>
            <person name="Davies J."/>
            <person name="Deadman R."/>
            <person name="Dunn M."/>
            <person name="Earthrowl M."/>
            <person name="Ellington A.G."/>
            <person name="Errington H."/>
            <person name="Frankish A."/>
            <person name="Frankland J."/>
            <person name="French L."/>
            <person name="Garner P."/>
            <person name="Garnett J."/>
            <person name="Gay L."/>
            <person name="Ghori M.R.J."/>
            <person name="Gibson R."/>
            <person name="Gilby L.M."/>
            <person name="Gillett W."/>
            <person name="Glithero R.J."/>
            <person name="Grafham D.V."/>
            <person name="Griffiths C."/>
            <person name="Griffiths-Jones S."/>
            <person name="Grocock R."/>
            <person name="Hammond S."/>
            <person name="Harrison E.S.I."/>
            <person name="Hart E."/>
            <person name="Haugen E."/>
            <person name="Heath P.D."/>
            <person name="Holmes S."/>
            <person name="Holt K."/>
            <person name="Howden P.J."/>
            <person name="Hunt A.R."/>
            <person name="Hunt S.E."/>
            <person name="Hunter G."/>
            <person name="Isherwood J."/>
            <person name="James R."/>
            <person name="Johnson C."/>
            <person name="Johnson D."/>
            <person name="Joy A."/>
            <person name="Kay M."/>
            <person name="Kershaw J.K."/>
            <person name="Kibukawa M."/>
            <person name="Kimberley A.M."/>
            <person name="King A."/>
            <person name="Knights A.J."/>
            <person name="Lad H."/>
            <person name="Laird G."/>
            <person name="Lawlor S."/>
            <person name="Leongamornlert D.A."/>
            <person name="Lloyd D.M."/>
            <person name="Loveland J."/>
            <person name="Lovell J."/>
            <person name="Lush M.J."/>
            <person name="Lyne R."/>
            <person name="Martin S."/>
            <person name="Mashreghi-Mohammadi M."/>
            <person name="Matthews L."/>
            <person name="Matthews N.S.W."/>
            <person name="McLaren S."/>
            <person name="Milne S."/>
            <person name="Mistry S."/>
            <person name="Moore M.J.F."/>
            <person name="Nickerson T."/>
            <person name="O'Dell C.N."/>
            <person name="Oliver K."/>
            <person name="Palmeiri A."/>
            <person name="Palmer S.A."/>
            <person name="Parker A."/>
            <person name="Patel D."/>
            <person name="Pearce A.V."/>
            <person name="Peck A.I."/>
            <person name="Pelan S."/>
            <person name="Phelps K."/>
            <person name="Phillimore B.J."/>
            <person name="Plumb R."/>
            <person name="Rajan J."/>
            <person name="Raymond C."/>
            <person name="Rouse G."/>
            <person name="Saenphimmachak C."/>
            <person name="Sehra H.K."/>
            <person name="Sheridan E."/>
            <person name="Shownkeen R."/>
            <person name="Sims S."/>
            <person name="Skuce C.D."/>
            <person name="Smith M."/>
            <person name="Steward C."/>
            <person name="Subramanian S."/>
            <person name="Sycamore N."/>
            <person name="Tracey A."/>
            <person name="Tromans A."/>
            <person name="Van Helmond Z."/>
            <person name="Wall M."/>
            <person name="Wallis J.M."/>
            <person name="White S."/>
            <person name="Whitehead S.L."/>
            <person name="Wilkinson J.E."/>
            <person name="Willey D.L."/>
            <person name="Williams H."/>
            <person name="Wilming L."/>
            <person name="Wray P.W."/>
            <person name="Wu Z."/>
            <person name="Coulson A."/>
            <person name="Vaudin M."/>
            <person name="Sulston J.E."/>
            <person name="Durbin R.M."/>
            <person name="Hubbard T."/>
            <person name="Wooster R."/>
            <person name="Dunham I."/>
            <person name="Carter N.P."/>
            <person name="McVean G."/>
            <person name="Ross M.T."/>
            <person name="Harrow J."/>
            <person name="Olson M.V."/>
            <person name="Beck S."/>
            <person name="Rogers J."/>
            <person name="Bentley D.R."/>
        </authorList>
    </citation>
    <scope>NUCLEOTIDE SEQUENCE [LARGE SCALE GENOMIC DNA]</scope>
</reference>
<reference key="4">
    <citation type="journal article" date="2004" name="Genome Res.">
        <title>The status, quality, and expansion of the NIH full-length cDNA project: the Mammalian Gene Collection (MGC).</title>
        <authorList>
            <consortium name="The MGC Project Team"/>
        </authorList>
    </citation>
    <scope>NUCLEOTIDE SEQUENCE [LARGE SCALE MRNA]</scope>
    <scope>VARIANTS MET-138; ASP-215 AND ALA-323</scope>
</reference>
<reference key="5">
    <citation type="journal article" date="2001" name="Chem. Res. Toxicol.">
        <title>Reduction of aflatoxin B1 dialdehyde by rat and human aldo-keto reductases.</title>
        <authorList>
            <person name="Guengerich F.P."/>
            <person name="Cai H."/>
            <person name="McMahon M."/>
            <person name="Hayes J.D."/>
            <person name="Sutter T.R."/>
            <person name="Groopman J.D."/>
            <person name="Deng Z."/>
            <person name="Harris T.M."/>
        </authorList>
    </citation>
    <scope>FUNCTION</scope>
    <scope>CATALYTIC ACTIVITY</scope>
</reference>
<reference key="6">
    <citation type="journal article" date="2008" name="Chem. Res. Toxicol.">
        <title>Protection against aflatoxin B1-induced cytotoxicity by expression of the cloned aflatoxin B1-aldehyde reductases rat AKR7A1 and human AKR7A3.</title>
        <authorList>
            <person name="Bodreddigari S."/>
            <person name="Jones L.K."/>
            <person name="Egner P.A."/>
            <person name="Groopman J.D."/>
            <person name="Sutter C.H."/>
            <person name="Roebuck B.D."/>
            <person name="Guengerich F.P."/>
            <person name="Kensler T.W."/>
            <person name="Sutter T.R."/>
        </authorList>
    </citation>
    <scope>FUNCTION</scope>
    <scope>CATALYTIC ACTIVITY</scope>
    <scope>BIOPHYSICOCHEMICAL PROPERTIES</scope>
    <scope>TISSUE SPECIFICITY</scope>
</reference>
<reference key="7">
    <citation type="journal article" date="2014" name="J. Proteomics">
        <title>An enzyme assisted RP-RPLC approach for in-depth analysis of human liver phosphoproteome.</title>
        <authorList>
            <person name="Bian Y."/>
            <person name="Song C."/>
            <person name="Cheng K."/>
            <person name="Dong M."/>
            <person name="Wang F."/>
            <person name="Huang J."/>
            <person name="Sun D."/>
            <person name="Wang L."/>
            <person name="Ye M."/>
            <person name="Zou H."/>
        </authorList>
    </citation>
    <scope>PHOSPHORYLATION [LARGE SCALE ANALYSIS] AT SER-85 AND THR-227</scope>
    <scope>IDENTIFICATION BY MASS SPECTROMETRY [LARGE SCALE ANALYSIS]</scope>
    <source>
        <tissue>Liver</tissue>
    </source>
</reference>
<reference evidence="15" key="8">
    <citation type="submission" date="2006-04" db="PDB data bank">
        <title>Crystal Structure of Human Aflatoxin B1 Aldehyde Reductase Member 3.</title>
        <authorList>
            <person name="Debreczeni J.E."/>
            <person name="Johansson C."/>
            <person name="Kavanagh K."/>
            <person name="Turnbull A."/>
            <person name="Papagrigoriou E."/>
            <person name="von Delft F."/>
            <person name="Edwards A."/>
            <person name="Arrowsmith C."/>
            <person name="Weigelt J."/>
            <person name="Sundstrom M."/>
            <person name="Oppermann U."/>
        </authorList>
    </citation>
    <scope>X-RAY CRYSTALLOGRAPHY (3.00 ANGSTROMS) OF 6-331 IN COMPLEX WITH NADPH</scope>
    <scope>SUBUNIT</scope>
</reference>
<organism>
    <name type="scientific">Homo sapiens</name>
    <name type="common">Human</name>
    <dbReference type="NCBI Taxonomy" id="9606"/>
    <lineage>
        <taxon>Eukaryota</taxon>
        <taxon>Metazoa</taxon>
        <taxon>Chordata</taxon>
        <taxon>Craniata</taxon>
        <taxon>Vertebrata</taxon>
        <taxon>Euteleostomi</taxon>
        <taxon>Mammalia</taxon>
        <taxon>Eutheria</taxon>
        <taxon>Euarchontoglires</taxon>
        <taxon>Primates</taxon>
        <taxon>Haplorrhini</taxon>
        <taxon>Catarrhini</taxon>
        <taxon>Hominidae</taxon>
        <taxon>Homo</taxon>
    </lineage>
</organism>
<sequence length="331" mass="37206">MSRQLSRARPATVLGAMEMGRRMDAPTSAAVTRAFLERGHTEIDTAFVYSEGQSETILGGLGLRLGGSDCRVKIDTKAIPLFGNSLKPDSLRFQLETSLKRLQCPRVDLFYLHMPDHSTPVEETLRACHQLHQEGKFVELGLSNYAAWEVAEICTLCKSNGWILPTVYQGMYNAITRQVETELFPCLRHFGLRFYAFNPLAGGLLTGKYKYEDKNGKQPVGRFFGNTWAEMYRNRYWKEHHFEGIALVEKALQAAYGASAPSMTSATLRWMYHHSQLQGAHGDAVILGMSSLEQLEQNLAAAEEGPLEPAVVDAFNQAWHLVTHECPNYFR</sequence>
<protein>
    <recommendedName>
        <fullName evidence="14">Aldo-keto reductase family 7 member A3</fullName>
        <ecNumber evidence="3 4 7">1.1.1.2</ecNumber>
    </recommendedName>
    <alternativeName>
        <fullName>AFB1 aldehyde reductase 2</fullName>
        <shortName>AFB1-AR 2</shortName>
    </alternativeName>
    <alternativeName>
        <fullName evidence="9">Aflatoxin B1 aldehyde reductase member 3</fullName>
    </alternativeName>
</protein>